<sequence length="339" mass="40233">MFITTWCSNDAPDSSVPRTRSKTKFTPKVRDLLFHCRYEIVDIVDEGYDMPASIGFYNDIIREFVTDDFCLTSLFEDNGQDSNNIQHRNDGCIWSIFDRLMNTNKFRDFDVIQGTFDTLQIIFFTNHESANNFIKNNLPRFMQTLHKLIACSNFFIQAKSFKFLNELFTAQTNYETRSLWMAEPAFIKLVVLAIQSNKHAVRSRAVSILEIFIRNPRNSPEVHEFIGRNRNVLIAFFFNSAPIHYYQGSPNEKEDAQYARMAYKLLNWDMQRPFTQEQLQDFEEGWTHQKKMREEQLVRTCFHDNNPRLPKVNHVYRTRIIPNQQFLREPLKFGNPFRQ</sequence>
<keyword id="KW-1185">Reference proteome</keyword>
<name>MO25L_CAEEL</name>
<accession>Q9TZM2</accession>
<organism>
    <name type="scientific">Caenorhabditis elegans</name>
    <dbReference type="NCBI Taxonomy" id="6239"/>
    <lineage>
        <taxon>Eukaryota</taxon>
        <taxon>Metazoa</taxon>
        <taxon>Ecdysozoa</taxon>
        <taxon>Nematoda</taxon>
        <taxon>Chromadorea</taxon>
        <taxon>Rhabditida</taxon>
        <taxon>Rhabditina</taxon>
        <taxon>Rhabditomorpha</taxon>
        <taxon>Rhabditoidea</taxon>
        <taxon>Rhabditidae</taxon>
        <taxon>Peloderinae</taxon>
        <taxon>Caenorhabditis</taxon>
    </lineage>
</organism>
<evidence type="ECO:0000305" key="1"/>
<dbReference type="EMBL" id="FO081425">
    <property type="protein sequence ID" value="CCD71544.1"/>
    <property type="molecule type" value="Genomic_DNA"/>
</dbReference>
<dbReference type="PIR" id="T33477">
    <property type="entry name" value="T33477"/>
</dbReference>
<dbReference type="RefSeq" id="NP_001317755.1">
    <property type="nucleotide sequence ID" value="NM_001330937.1"/>
</dbReference>
<dbReference type="SMR" id="Q9TZM2"/>
<dbReference type="FunCoup" id="Q9TZM2">
    <property type="interactions" value="348"/>
</dbReference>
<dbReference type="STRING" id="6239.T27C10.3.1"/>
<dbReference type="PaxDb" id="6239-T27C10.3"/>
<dbReference type="EnsemblMetazoa" id="T27C10.3.1">
    <property type="protein sequence ID" value="T27C10.3.1"/>
    <property type="gene ID" value="WBGene00020858"/>
</dbReference>
<dbReference type="EnsemblMetazoa" id="T27C10.3.2">
    <property type="protein sequence ID" value="T27C10.3.2"/>
    <property type="gene ID" value="WBGene00020858"/>
</dbReference>
<dbReference type="GeneID" id="188992"/>
<dbReference type="KEGG" id="cel:CELE_T27C10.3"/>
<dbReference type="AGR" id="WB:WBGene00020858"/>
<dbReference type="CTD" id="188992"/>
<dbReference type="WormBase" id="T27C10.3">
    <property type="protein sequence ID" value="CE51737"/>
    <property type="gene ID" value="WBGene00020858"/>
    <property type="gene designation" value="mop-25.3"/>
</dbReference>
<dbReference type="eggNOG" id="KOG1566">
    <property type="taxonomic scope" value="Eukaryota"/>
</dbReference>
<dbReference type="GeneTree" id="ENSGT00390000004360"/>
<dbReference type="HOGENOM" id="CLU_048944_0_0_1"/>
<dbReference type="InParanoid" id="Q9TZM2"/>
<dbReference type="OMA" id="ANDYEEM"/>
<dbReference type="OrthoDB" id="5798113at2759"/>
<dbReference type="PhylomeDB" id="Q9TZM2"/>
<dbReference type="Reactome" id="R-CEL-6798695">
    <property type="pathway name" value="Neutrophil degranulation"/>
</dbReference>
<dbReference type="PRO" id="PR:Q9TZM2"/>
<dbReference type="Proteomes" id="UP000001940">
    <property type="component" value="Chromosome I"/>
</dbReference>
<dbReference type="Bgee" id="WBGene00020858">
    <property type="expression patterns" value="Expressed in germ line (C elegans) and 3 other cell types or tissues"/>
</dbReference>
<dbReference type="GO" id="GO:0043539">
    <property type="term" value="F:protein serine/threonine kinase activator activity"/>
    <property type="evidence" value="ECO:0000318"/>
    <property type="project" value="GO_Central"/>
</dbReference>
<dbReference type="GO" id="GO:0035556">
    <property type="term" value="P:intracellular signal transduction"/>
    <property type="evidence" value="ECO:0000318"/>
    <property type="project" value="GO_Central"/>
</dbReference>
<dbReference type="Gene3D" id="1.25.10.10">
    <property type="entry name" value="Leucine-rich Repeat Variant"/>
    <property type="match status" value="1"/>
</dbReference>
<dbReference type="InterPro" id="IPR011989">
    <property type="entry name" value="ARM-like"/>
</dbReference>
<dbReference type="InterPro" id="IPR016024">
    <property type="entry name" value="ARM-type_fold"/>
</dbReference>
<dbReference type="InterPro" id="IPR013878">
    <property type="entry name" value="Mo25"/>
</dbReference>
<dbReference type="PANTHER" id="PTHR10182">
    <property type="entry name" value="CALCIUM-BINDING PROTEIN 39-RELATED"/>
    <property type="match status" value="1"/>
</dbReference>
<dbReference type="PANTHER" id="PTHR10182:SF32">
    <property type="entry name" value="MO25-LIKE PROTEIN 3"/>
    <property type="match status" value="1"/>
</dbReference>
<dbReference type="Pfam" id="PF08569">
    <property type="entry name" value="Mo25"/>
    <property type="match status" value="1"/>
</dbReference>
<dbReference type="SUPFAM" id="SSF48371">
    <property type="entry name" value="ARM repeat"/>
    <property type="match status" value="1"/>
</dbReference>
<reference key="1">
    <citation type="journal article" date="1998" name="Science">
        <title>Genome sequence of the nematode C. elegans: a platform for investigating biology.</title>
        <authorList>
            <consortium name="The C. elegans sequencing consortium"/>
        </authorList>
    </citation>
    <scope>NUCLEOTIDE SEQUENCE [LARGE SCALE GENOMIC DNA]</scope>
    <source>
        <strain>Bristol N2</strain>
    </source>
</reference>
<proteinExistence type="inferred from homology"/>
<protein>
    <recommendedName>
        <fullName>MO25-like protein 3</fullName>
    </recommendedName>
</protein>
<comment type="similarity">
    <text evidence="1">Belongs to the Mo25 family.</text>
</comment>
<feature type="chain" id="PRO_0000209829" description="MO25-like protein 3">
    <location>
        <begin position="1"/>
        <end position="339"/>
    </location>
</feature>
<gene>
    <name type="primary">mop-25.3</name>
    <name type="ORF">T27C10.3</name>
</gene>